<evidence type="ECO:0000269" key="1">
    <source>
    </source>
</evidence>
<evidence type="ECO:0000269" key="2">
    <source>
    </source>
</evidence>
<evidence type="ECO:0000269" key="3">
    <source>
    </source>
</evidence>
<evidence type="ECO:0000305" key="4"/>
<evidence type="ECO:0000312" key="5">
    <source>
        <dbReference type="WormBase" id="C29E4.4"/>
    </source>
</evidence>
<comment type="function">
    <text evidence="1">Important for early nematode development.</text>
</comment>
<comment type="subcellular location">
    <subcellularLocation>
        <location evidence="2 3">Nucleus envelope</location>
    </subcellularLocation>
    <subcellularLocation>
        <location evidence="1">Nucleus</location>
        <location evidence="1">Nuclear pore complex</location>
    </subcellularLocation>
    <text evidence="2">Recruited early during nuclear envelope assembly after mitosis.</text>
</comment>
<comment type="similarity">
    <text evidence="4">Belongs to the nucleoporin Nup133 family.</text>
</comment>
<proteinExistence type="inferred from homology"/>
<dbReference type="EMBL" id="FO080706">
    <property type="protein sequence ID" value="CCD66018.1"/>
    <property type="molecule type" value="Genomic_DNA"/>
</dbReference>
<dbReference type="PIR" id="S44772">
    <property type="entry name" value="S44772"/>
</dbReference>
<dbReference type="RefSeq" id="NP_498724.4">
    <property type="nucleotide sequence ID" value="NM_066323.5"/>
</dbReference>
<dbReference type="SMR" id="P34343"/>
<dbReference type="BioGRID" id="41321">
    <property type="interactions" value="10"/>
</dbReference>
<dbReference type="FunCoup" id="P34343">
    <property type="interactions" value="2887"/>
</dbReference>
<dbReference type="STRING" id="6239.C29E4.4.1"/>
<dbReference type="iPTMnet" id="P34343"/>
<dbReference type="PaxDb" id="6239-C29E4.4"/>
<dbReference type="PeptideAtlas" id="P34343"/>
<dbReference type="EnsemblMetazoa" id="C29E4.4.1">
    <property type="protein sequence ID" value="C29E4.4.1"/>
    <property type="gene ID" value="WBGene00003801"/>
</dbReference>
<dbReference type="GeneID" id="176114"/>
<dbReference type="KEGG" id="cel:CELE_C29E4.4"/>
<dbReference type="UCSC" id="C29E4.4">
    <property type="organism name" value="c. elegans"/>
</dbReference>
<dbReference type="AGR" id="WB:WBGene00003801"/>
<dbReference type="CTD" id="176114"/>
<dbReference type="WormBase" id="C29E4.4">
    <property type="protein sequence ID" value="CE46384"/>
    <property type="gene ID" value="WBGene00003801"/>
    <property type="gene designation" value="npp-15"/>
</dbReference>
<dbReference type="eggNOG" id="KOG3575">
    <property type="taxonomic scope" value="Eukaryota"/>
</dbReference>
<dbReference type="GeneTree" id="ENSGT00390000011529"/>
<dbReference type="HOGENOM" id="CLU_277093_0_0_1"/>
<dbReference type="InParanoid" id="P34343"/>
<dbReference type="OMA" id="TRKYEEY"/>
<dbReference type="OrthoDB" id="103454at2759"/>
<dbReference type="PhylomeDB" id="P34343"/>
<dbReference type="Reactome" id="R-CEL-9615933">
    <property type="pathway name" value="Postmitotic nuclear pore complex (NPC) reformation"/>
</dbReference>
<dbReference type="PRO" id="PR:P34343"/>
<dbReference type="Proteomes" id="UP000001940">
    <property type="component" value="Chromosome III"/>
</dbReference>
<dbReference type="Bgee" id="WBGene00003801">
    <property type="expression patterns" value="Expressed in germ line (C elegans) and 4 other cell types or tissues"/>
</dbReference>
<dbReference type="GO" id="GO:0000776">
    <property type="term" value="C:kinetochore"/>
    <property type="evidence" value="ECO:0000315"/>
    <property type="project" value="UniProtKB"/>
</dbReference>
<dbReference type="GO" id="GO:0031965">
    <property type="term" value="C:nuclear membrane"/>
    <property type="evidence" value="ECO:0000314"/>
    <property type="project" value="UniProtKB"/>
</dbReference>
<dbReference type="GO" id="GO:0005643">
    <property type="term" value="C:nuclear pore"/>
    <property type="evidence" value="ECO:0000314"/>
    <property type="project" value="UniProtKB"/>
</dbReference>
<dbReference type="GO" id="GO:0031080">
    <property type="term" value="C:nuclear pore outer ring"/>
    <property type="evidence" value="ECO:0000318"/>
    <property type="project" value="GO_Central"/>
</dbReference>
<dbReference type="GO" id="GO:0017056">
    <property type="term" value="F:structural constituent of nuclear pore"/>
    <property type="evidence" value="ECO:0000318"/>
    <property type="project" value="GO_Central"/>
</dbReference>
<dbReference type="GO" id="GO:0016973">
    <property type="term" value="P:poly(A)+ mRNA export from nucleus"/>
    <property type="evidence" value="ECO:0000318"/>
    <property type="project" value="GO_Central"/>
</dbReference>
<dbReference type="GO" id="GO:0006606">
    <property type="term" value="P:protein import into nucleus"/>
    <property type="evidence" value="ECO:0000318"/>
    <property type="project" value="GO_Central"/>
</dbReference>
<dbReference type="GO" id="GO:0000972">
    <property type="term" value="P:transcription-dependent tethering of RNA polymerase II gene DNA at nuclear periphery"/>
    <property type="evidence" value="ECO:0000318"/>
    <property type="project" value="GO_Central"/>
</dbReference>
<dbReference type="Gene3D" id="2.130.10.10">
    <property type="entry name" value="YVTN repeat-like/Quinoprotein amine dehydrogenase"/>
    <property type="match status" value="1"/>
</dbReference>
<dbReference type="InterPro" id="IPR014908">
    <property type="entry name" value="Nucleoporin_Nup133/Nup155_N"/>
</dbReference>
<dbReference type="InterPro" id="IPR037624">
    <property type="entry name" value="Nup133-like"/>
</dbReference>
<dbReference type="InterPro" id="IPR015943">
    <property type="entry name" value="WD40/YVTN_repeat-like_dom_sf"/>
</dbReference>
<dbReference type="PANTHER" id="PTHR13405">
    <property type="entry name" value="NUCLEAR PORE COMPLEX PROTEIN NUP133"/>
    <property type="match status" value="1"/>
</dbReference>
<dbReference type="PANTHER" id="PTHR13405:SF11">
    <property type="entry name" value="NUCLEAR PORE COMPLEX PROTEIN NUP133"/>
    <property type="match status" value="1"/>
</dbReference>
<dbReference type="Pfam" id="PF08801">
    <property type="entry name" value="Nucleoporin_N"/>
    <property type="match status" value="1"/>
</dbReference>
<dbReference type="SUPFAM" id="SSF117289">
    <property type="entry name" value="Nucleoporin domain"/>
    <property type="match status" value="1"/>
</dbReference>
<feature type="chain" id="PRO_0000204840" description="Nuclear pore complex protein 15">
    <location>
        <begin position="1"/>
        <end position="1129"/>
    </location>
</feature>
<protein>
    <recommendedName>
        <fullName>Nuclear pore complex protein 15</fullName>
    </recommendedName>
    <alternativeName>
        <fullName>Nucleoporin npp-15</fullName>
    </alternativeName>
</protein>
<gene>
    <name evidence="5" type="primary">npp-15</name>
    <name type="synonym">nup133</name>
    <name type="ORF">C29E4.4</name>
</gene>
<accession>P34343</accession>
<accession>Q5WRU8</accession>
<organism>
    <name type="scientific">Caenorhabditis elegans</name>
    <dbReference type="NCBI Taxonomy" id="6239"/>
    <lineage>
        <taxon>Eukaryota</taxon>
        <taxon>Metazoa</taxon>
        <taxon>Ecdysozoa</taxon>
        <taxon>Nematoda</taxon>
        <taxon>Chromadorea</taxon>
        <taxon>Rhabditida</taxon>
        <taxon>Rhabditina</taxon>
        <taxon>Rhabditomorpha</taxon>
        <taxon>Rhabditoidea</taxon>
        <taxon>Rhabditidae</taxon>
        <taxon>Peloderinae</taxon>
        <taxon>Caenorhabditis</taxon>
    </lineage>
</organism>
<reference key="1">
    <citation type="journal article" date="1994" name="Nature">
        <title>2.2 Mb of contiguous nucleotide sequence from chromosome III of C. elegans.</title>
        <authorList>
            <person name="Wilson R."/>
            <person name="Ainscough R."/>
            <person name="Anderson K."/>
            <person name="Baynes C."/>
            <person name="Berks M."/>
            <person name="Bonfield J."/>
            <person name="Burton J."/>
            <person name="Connell M."/>
            <person name="Copsey T."/>
            <person name="Cooper J."/>
            <person name="Coulson A."/>
            <person name="Craxton M."/>
            <person name="Dear S."/>
            <person name="Du Z."/>
            <person name="Durbin R."/>
            <person name="Favello A."/>
            <person name="Fraser A."/>
            <person name="Fulton L."/>
            <person name="Gardner A."/>
            <person name="Green P."/>
            <person name="Hawkins T."/>
            <person name="Hillier L."/>
            <person name="Jier M."/>
            <person name="Johnston L."/>
            <person name="Jones M."/>
            <person name="Kershaw J."/>
            <person name="Kirsten J."/>
            <person name="Laisster N."/>
            <person name="Latreille P."/>
            <person name="Lightning J."/>
            <person name="Lloyd C."/>
            <person name="Mortimore B."/>
            <person name="O'Callaghan M."/>
            <person name="Parsons J."/>
            <person name="Percy C."/>
            <person name="Rifken L."/>
            <person name="Roopra A."/>
            <person name="Saunders D."/>
            <person name="Shownkeen R."/>
            <person name="Sims M."/>
            <person name="Smaldon N."/>
            <person name="Smith A."/>
            <person name="Smith M."/>
            <person name="Sonnhammer E."/>
            <person name="Staden R."/>
            <person name="Sulston J."/>
            <person name="Thierry-Mieg J."/>
            <person name="Thomas K."/>
            <person name="Vaudin M."/>
            <person name="Vaughan K."/>
            <person name="Waterston R."/>
            <person name="Watson A."/>
            <person name="Weinstock L."/>
            <person name="Wilkinson-Sproat J."/>
            <person name="Wohldman P."/>
        </authorList>
    </citation>
    <scope>NUCLEOTIDE SEQUENCE [LARGE SCALE GENOMIC DNA]</scope>
    <source>
        <strain>Bristol N2</strain>
    </source>
</reference>
<reference key="2">
    <citation type="journal article" date="1998" name="Science">
        <title>Genome sequence of the nematode C. elegans: a platform for investigating biology.</title>
        <authorList>
            <consortium name="The C. elegans sequencing consortium"/>
        </authorList>
    </citation>
    <scope>NUCLEOTIDE SEQUENCE [LARGE SCALE GENOMIC DNA]</scope>
    <source>
        <strain>Bristol N2</strain>
    </source>
</reference>
<reference key="3">
    <citation type="journal article" date="2003" name="Mol. Biol. Cell">
        <title>Caenorhabditis elegans nucleoporins Nup93 and Nup205 determine the limit of nuclear pore complex size exclusion in vivo.</title>
        <authorList>
            <person name="Galy V."/>
            <person name="Mattaj I.W."/>
            <person name="Askjaer P."/>
        </authorList>
    </citation>
    <scope>FUNCTION</scope>
    <scope>SUBCELLULAR LOCATION</scope>
</reference>
<reference key="4">
    <citation type="journal article" date="2006" name="Curr. Biol.">
        <title>MEL-28, a novel nuclear-envelope and kinetochore protein essential for zygotic nuclear-envelope assembly in C. elegans.</title>
        <authorList>
            <person name="Galy V."/>
            <person name="Askjaer P."/>
            <person name="Franz C."/>
            <person name="Lopez-Iglesias C."/>
            <person name="Mattaj I.W."/>
        </authorList>
    </citation>
    <scope>SUBCELLULAR LOCATION</scope>
</reference>
<reference key="5">
    <citation type="journal article" date="2022" name="Elife">
        <title>Ndc1 drives nuclear pore complex assembly independent of membrane biogenesis to promote nuclear formation and growth.</title>
        <authorList>
            <person name="Mauro M.S."/>
            <person name="Celma G."/>
            <person name="Zimyanin V."/>
            <person name="Magaj M.M."/>
            <person name="Gibson K.H."/>
            <person name="Redemann S."/>
            <person name="Bahmanyar S."/>
        </authorList>
    </citation>
    <scope>SUBCELLULAR LOCATION</scope>
</reference>
<keyword id="KW-0217">Developmental protein</keyword>
<keyword id="KW-0509">mRNA transport</keyword>
<keyword id="KW-0906">Nuclear pore complex</keyword>
<keyword id="KW-0539">Nucleus</keyword>
<keyword id="KW-0653">Protein transport</keyword>
<keyword id="KW-1185">Reference proteome</keyword>
<keyword id="KW-0811">Translocation</keyword>
<keyword id="KW-0813">Transport</keyword>
<name>NU133_CAEEL</name>
<sequence>MSGRDLELTLDRVSSIEYPALVKEAFLNNWHASAHRSEVTSNCASLNDRYCWVLSRNQIFIWERAKSSHRAIIPTQLPLPTSGLPRSVKCVVVYDGVHRGANKTPCPGILVVSPEGVLRHWTSIESQTYIEEVLDINNEVALRVELTDEPIDGKSASFLLTTTSGTVYFLNGKGQDSAKTGALECNKVAGREAHGFRRRLSSIMFGGESKESTSLITNSFQHQSKDLLVVTVSPDVLTVYNMYTPCELWSLKTKEFFQPKIASFFEADLKRTPLKVRARLIDAAVFRDGLMILIGGTHEESQSVHMFMVWMSANWQTEQPTGVVWSARVPMNEHRALFSKIDDSIYSNLTLCIPKNTAESKKADRTDGIIIINPYFAVSLYLPFDLAKPKKPESLYRHVSIPPRDQLLGYAICSQYVYIMMLESGVSTIRLLPRGFADSSIYTHEQVVVPSLSVGTDDWPILSELLSEMVASGLPKTPLYQSLHRAFELFAEKHMAESEEELKAIIKMPDQEIARIVSQFLYAIIDYSDAANKTDTELHAKRVLTSRIMLFLKHMGVYERIISSPLGISRGGILSLRVGGTMLGEVSERVAASTAIWTWKTSNETNSAVFDAIIEKVLRIPEVQDLGLKDKDALFGRCGLVHHIPVVAAQQLEKNVIGKTKSHRFEVFHAVCELLSGIKETIISWRNCRTKVAIPKFPIWWTLETFASCYRDVAEKIIEELKNGSSTDSERARLLMYILSIYDFYLSESDSQPDNDKVLQEMIALGKPADAMELAEKHKDFGTLVKNYLTTDVGTRQKTFERYKKMFEKDDFEMYLCDYLKEHGRNDVLLQQGGSRVDAYLDNFKELRYSREIANKQFGKAALTLMSLADAETKSFSKFVEFLTRAYYCACSSIDGTDVSEVLDFYKRRYPEMKHRKRIPTEILKICFGNDLDAMMSVEDMLEWNMAVQPNDEASVEGFARAFHLLADLLAVHPDSDELKKKIDKTWKALVDYDEWNRVRSKEDVEKKTIFGKFCNYLINSYPADKGDSFPIWMPISRRLIFPTDIDTVLDECIANTTGNHLSWIKGHLKWIGEQLCKQALLPKSAFFRPDMKQVGSISQAALEAFGPILQRREQRFIDQLNRDSMMET</sequence>